<evidence type="ECO:0000255" key="1">
    <source>
        <dbReference type="HAMAP-Rule" id="MF_01227"/>
    </source>
</evidence>
<reference key="1">
    <citation type="journal article" date="2003" name="Nature">
        <title>Unique physiological and pathogenic features of Leptospira interrogans revealed by whole-genome sequencing.</title>
        <authorList>
            <person name="Ren S.-X."/>
            <person name="Fu G."/>
            <person name="Jiang X.-G."/>
            <person name="Zeng R."/>
            <person name="Miao Y.-G."/>
            <person name="Xu H."/>
            <person name="Zhang Y.-X."/>
            <person name="Xiong H."/>
            <person name="Lu G."/>
            <person name="Lu L.-F."/>
            <person name="Jiang H.-Q."/>
            <person name="Jia J."/>
            <person name="Tu Y.-F."/>
            <person name="Jiang J.-X."/>
            <person name="Gu W.-Y."/>
            <person name="Zhang Y.-Q."/>
            <person name="Cai Z."/>
            <person name="Sheng H.-H."/>
            <person name="Yin H.-F."/>
            <person name="Zhang Y."/>
            <person name="Zhu G.-F."/>
            <person name="Wan M."/>
            <person name="Huang H.-L."/>
            <person name="Qian Z."/>
            <person name="Wang S.-Y."/>
            <person name="Ma W."/>
            <person name="Yao Z.-J."/>
            <person name="Shen Y."/>
            <person name="Qiang B.-Q."/>
            <person name="Xia Q.-C."/>
            <person name="Guo X.-K."/>
            <person name="Danchin A."/>
            <person name="Saint Girons I."/>
            <person name="Somerville R.L."/>
            <person name="Wen Y.-M."/>
            <person name="Shi M.-H."/>
            <person name="Chen Z."/>
            <person name="Xu J.-G."/>
            <person name="Zhao G.-P."/>
        </authorList>
    </citation>
    <scope>NUCLEOTIDE SEQUENCE [LARGE SCALE GENOMIC DNA]</scope>
    <source>
        <strain>56601</strain>
    </source>
</reference>
<dbReference type="EC" id="6.3.4.2" evidence="1"/>
<dbReference type="EMBL" id="AE010300">
    <property type="protein sequence ID" value="AAN49608.2"/>
    <property type="molecule type" value="Genomic_DNA"/>
</dbReference>
<dbReference type="RefSeq" id="NP_712590.2">
    <property type="nucleotide sequence ID" value="NC_004342.2"/>
</dbReference>
<dbReference type="RefSeq" id="WP_000091728.1">
    <property type="nucleotide sequence ID" value="NC_004342.2"/>
</dbReference>
<dbReference type="SMR" id="Q8F3J3"/>
<dbReference type="FunCoup" id="Q8F3J3">
    <property type="interactions" value="419"/>
</dbReference>
<dbReference type="STRING" id="189518.LA_2409"/>
<dbReference type="PaxDb" id="189518-LA_2409"/>
<dbReference type="EnsemblBacteria" id="AAN49608">
    <property type="protein sequence ID" value="AAN49608"/>
    <property type="gene ID" value="LA_2409"/>
</dbReference>
<dbReference type="KEGG" id="lil:LA_2409"/>
<dbReference type="PATRIC" id="fig|189518.3.peg.2388"/>
<dbReference type="HOGENOM" id="CLU_011675_5_0_12"/>
<dbReference type="InParanoid" id="Q8F3J3"/>
<dbReference type="OrthoDB" id="9801107at2"/>
<dbReference type="UniPathway" id="UPA00159">
    <property type="reaction ID" value="UER00277"/>
</dbReference>
<dbReference type="Proteomes" id="UP000001408">
    <property type="component" value="Chromosome I"/>
</dbReference>
<dbReference type="GO" id="GO:0005829">
    <property type="term" value="C:cytosol"/>
    <property type="evidence" value="ECO:0000318"/>
    <property type="project" value="GO_Central"/>
</dbReference>
<dbReference type="GO" id="GO:0005524">
    <property type="term" value="F:ATP binding"/>
    <property type="evidence" value="ECO:0007669"/>
    <property type="project" value="UniProtKB-KW"/>
</dbReference>
<dbReference type="GO" id="GO:0003883">
    <property type="term" value="F:CTP synthase activity"/>
    <property type="evidence" value="ECO:0000318"/>
    <property type="project" value="GO_Central"/>
</dbReference>
<dbReference type="GO" id="GO:0004359">
    <property type="term" value="F:glutaminase activity"/>
    <property type="evidence" value="ECO:0007669"/>
    <property type="project" value="RHEA"/>
</dbReference>
<dbReference type="GO" id="GO:0042802">
    <property type="term" value="F:identical protein binding"/>
    <property type="evidence" value="ECO:0000318"/>
    <property type="project" value="GO_Central"/>
</dbReference>
<dbReference type="GO" id="GO:0046872">
    <property type="term" value="F:metal ion binding"/>
    <property type="evidence" value="ECO:0007669"/>
    <property type="project" value="UniProtKB-KW"/>
</dbReference>
<dbReference type="GO" id="GO:0044210">
    <property type="term" value="P:'de novo' CTP biosynthetic process"/>
    <property type="evidence" value="ECO:0007669"/>
    <property type="project" value="UniProtKB-UniRule"/>
</dbReference>
<dbReference type="GO" id="GO:0006241">
    <property type="term" value="P:CTP biosynthetic process"/>
    <property type="evidence" value="ECO:0000318"/>
    <property type="project" value="GO_Central"/>
</dbReference>
<dbReference type="GO" id="GO:0019856">
    <property type="term" value="P:pyrimidine nucleobase biosynthetic process"/>
    <property type="evidence" value="ECO:0000318"/>
    <property type="project" value="GO_Central"/>
</dbReference>
<dbReference type="CDD" id="cd03113">
    <property type="entry name" value="CTPS_N"/>
    <property type="match status" value="1"/>
</dbReference>
<dbReference type="CDD" id="cd01746">
    <property type="entry name" value="GATase1_CTP_Synthase"/>
    <property type="match status" value="1"/>
</dbReference>
<dbReference type="FunFam" id="3.40.50.300:FF:000009">
    <property type="entry name" value="CTP synthase"/>
    <property type="match status" value="1"/>
</dbReference>
<dbReference type="FunFam" id="3.40.50.880:FF:000002">
    <property type="entry name" value="CTP synthase"/>
    <property type="match status" value="1"/>
</dbReference>
<dbReference type="Gene3D" id="3.40.50.880">
    <property type="match status" value="1"/>
</dbReference>
<dbReference type="Gene3D" id="3.40.50.300">
    <property type="entry name" value="P-loop containing nucleotide triphosphate hydrolases"/>
    <property type="match status" value="1"/>
</dbReference>
<dbReference type="HAMAP" id="MF_01227">
    <property type="entry name" value="PyrG"/>
    <property type="match status" value="1"/>
</dbReference>
<dbReference type="InterPro" id="IPR029062">
    <property type="entry name" value="Class_I_gatase-like"/>
</dbReference>
<dbReference type="InterPro" id="IPR004468">
    <property type="entry name" value="CTP_synthase"/>
</dbReference>
<dbReference type="InterPro" id="IPR017456">
    <property type="entry name" value="CTP_synthase_N"/>
</dbReference>
<dbReference type="InterPro" id="IPR017926">
    <property type="entry name" value="GATASE"/>
</dbReference>
<dbReference type="InterPro" id="IPR033828">
    <property type="entry name" value="GATase1_CTP_Synthase"/>
</dbReference>
<dbReference type="InterPro" id="IPR027417">
    <property type="entry name" value="P-loop_NTPase"/>
</dbReference>
<dbReference type="NCBIfam" id="NF003792">
    <property type="entry name" value="PRK05380.1"/>
    <property type="match status" value="1"/>
</dbReference>
<dbReference type="NCBIfam" id="TIGR00337">
    <property type="entry name" value="PyrG"/>
    <property type="match status" value="1"/>
</dbReference>
<dbReference type="PANTHER" id="PTHR11550">
    <property type="entry name" value="CTP SYNTHASE"/>
    <property type="match status" value="1"/>
</dbReference>
<dbReference type="PANTHER" id="PTHR11550:SF0">
    <property type="entry name" value="CTP SYNTHASE-RELATED"/>
    <property type="match status" value="1"/>
</dbReference>
<dbReference type="Pfam" id="PF06418">
    <property type="entry name" value="CTP_synth_N"/>
    <property type="match status" value="1"/>
</dbReference>
<dbReference type="Pfam" id="PF00117">
    <property type="entry name" value="GATase"/>
    <property type="match status" value="1"/>
</dbReference>
<dbReference type="SUPFAM" id="SSF52317">
    <property type="entry name" value="Class I glutamine amidotransferase-like"/>
    <property type="match status" value="1"/>
</dbReference>
<dbReference type="SUPFAM" id="SSF52540">
    <property type="entry name" value="P-loop containing nucleoside triphosphate hydrolases"/>
    <property type="match status" value="1"/>
</dbReference>
<dbReference type="PROSITE" id="PS51273">
    <property type="entry name" value="GATASE_TYPE_1"/>
    <property type="match status" value="1"/>
</dbReference>
<feature type="chain" id="PRO_0000138195" description="CTP synthase">
    <location>
        <begin position="1"/>
        <end position="538"/>
    </location>
</feature>
<feature type="domain" description="Glutamine amidotransferase type-1" evidence="1">
    <location>
        <begin position="295"/>
        <end position="537"/>
    </location>
</feature>
<feature type="region of interest" description="Amidoligase domain" evidence="1">
    <location>
        <begin position="1"/>
        <end position="270"/>
    </location>
</feature>
<feature type="active site" description="Nucleophile; for glutamine hydrolysis" evidence="1">
    <location>
        <position position="384"/>
    </location>
</feature>
<feature type="active site" evidence="1">
    <location>
        <position position="510"/>
    </location>
</feature>
<feature type="active site" evidence="1">
    <location>
        <position position="512"/>
    </location>
</feature>
<feature type="binding site" evidence="1">
    <location>
        <position position="15"/>
    </location>
    <ligand>
        <name>CTP</name>
        <dbReference type="ChEBI" id="CHEBI:37563"/>
        <note>allosteric inhibitor</note>
    </ligand>
</feature>
<feature type="binding site" evidence="1">
    <location>
        <position position="15"/>
    </location>
    <ligand>
        <name>UTP</name>
        <dbReference type="ChEBI" id="CHEBI:46398"/>
    </ligand>
</feature>
<feature type="binding site" evidence="1">
    <location>
        <begin position="16"/>
        <end position="21"/>
    </location>
    <ligand>
        <name>ATP</name>
        <dbReference type="ChEBI" id="CHEBI:30616"/>
    </ligand>
</feature>
<feature type="binding site" evidence="1">
    <location>
        <position position="56"/>
    </location>
    <ligand>
        <name>L-glutamine</name>
        <dbReference type="ChEBI" id="CHEBI:58359"/>
    </ligand>
</feature>
<feature type="binding site" evidence="1">
    <location>
        <position position="73"/>
    </location>
    <ligand>
        <name>ATP</name>
        <dbReference type="ChEBI" id="CHEBI:30616"/>
    </ligand>
</feature>
<feature type="binding site" evidence="1">
    <location>
        <position position="73"/>
    </location>
    <ligand>
        <name>Mg(2+)</name>
        <dbReference type="ChEBI" id="CHEBI:18420"/>
    </ligand>
</feature>
<feature type="binding site" evidence="1">
    <location>
        <position position="143"/>
    </location>
    <ligand>
        <name>Mg(2+)</name>
        <dbReference type="ChEBI" id="CHEBI:18420"/>
    </ligand>
</feature>
<feature type="binding site" evidence="1">
    <location>
        <begin position="150"/>
        <end position="152"/>
    </location>
    <ligand>
        <name>CTP</name>
        <dbReference type="ChEBI" id="CHEBI:37563"/>
        <note>allosteric inhibitor</note>
    </ligand>
</feature>
<feature type="binding site" evidence="1">
    <location>
        <begin position="190"/>
        <end position="195"/>
    </location>
    <ligand>
        <name>CTP</name>
        <dbReference type="ChEBI" id="CHEBI:37563"/>
        <note>allosteric inhibitor</note>
    </ligand>
</feature>
<feature type="binding site" evidence="1">
    <location>
        <begin position="190"/>
        <end position="195"/>
    </location>
    <ligand>
        <name>UTP</name>
        <dbReference type="ChEBI" id="CHEBI:46398"/>
    </ligand>
</feature>
<feature type="binding site" evidence="1">
    <location>
        <position position="226"/>
    </location>
    <ligand>
        <name>CTP</name>
        <dbReference type="ChEBI" id="CHEBI:37563"/>
        <note>allosteric inhibitor</note>
    </ligand>
</feature>
<feature type="binding site" evidence="1">
    <location>
        <position position="226"/>
    </location>
    <ligand>
        <name>UTP</name>
        <dbReference type="ChEBI" id="CHEBI:46398"/>
    </ligand>
</feature>
<feature type="binding site" evidence="1">
    <location>
        <position position="357"/>
    </location>
    <ligand>
        <name>L-glutamine</name>
        <dbReference type="ChEBI" id="CHEBI:58359"/>
    </ligand>
</feature>
<feature type="binding site" evidence="1">
    <location>
        <begin position="385"/>
        <end position="388"/>
    </location>
    <ligand>
        <name>L-glutamine</name>
        <dbReference type="ChEBI" id="CHEBI:58359"/>
    </ligand>
</feature>
<feature type="binding site" evidence="1">
    <location>
        <position position="408"/>
    </location>
    <ligand>
        <name>L-glutamine</name>
        <dbReference type="ChEBI" id="CHEBI:58359"/>
    </ligand>
</feature>
<feature type="binding site" evidence="1">
    <location>
        <position position="465"/>
    </location>
    <ligand>
        <name>L-glutamine</name>
        <dbReference type="ChEBI" id="CHEBI:58359"/>
    </ligand>
</feature>
<keyword id="KW-0067">ATP-binding</keyword>
<keyword id="KW-0315">Glutamine amidotransferase</keyword>
<keyword id="KW-0436">Ligase</keyword>
<keyword id="KW-0460">Magnesium</keyword>
<keyword id="KW-0479">Metal-binding</keyword>
<keyword id="KW-0547">Nucleotide-binding</keyword>
<keyword id="KW-0665">Pyrimidine biosynthesis</keyword>
<keyword id="KW-1185">Reference proteome</keyword>
<protein>
    <recommendedName>
        <fullName evidence="1">CTP synthase</fullName>
        <ecNumber evidence="1">6.3.4.2</ecNumber>
    </recommendedName>
    <alternativeName>
        <fullName evidence="1">Cytidine 5'-triphosphate synthase</fullName>
    </alternativeName>
    <alternativeName>
        <fullName evidence="1">Cytidine triphosphate synthetase</fullName>
        <shortName evidence="1">CTP synthetase</shortName>
        <shortName evidence="1">CTPS</shortName>
    </alternativeName>
    <alternativeName>
        <fullName evidence="1">UTP--ammonia ligase</fullName>
    </alternativeName>
</protein>
<organism>
    <name type="scientific">Leptospira interrogans serogroup Icterohaemorrhagiae serovar Lai (strain 56601)</name>
    <dbReference type="NCBI Taxonomy" id="189518"/>
    <lineage>
        <taxon>Bacteria</taxon>
        <taxon>Pseudomonadati</taxon>
        <taxon>Spirochaetota</taxon>
        <taxon>Spirochaetia</taxon>
        <taxon>Leptospirales</taxon>
        <taxon>Leptospiraceae</taxon>
        <taxon>Leptospira</taxon>
    </lineage>
</organism>
<accession>Q8F3J3</accession>
<gene>
    <name evidence="1" type="primary">pyrG</name>
    <name type="ordered locus">LA_2409</name>
</gene>
<proteinExistence type="inferred from homology"/>
<sequence>MSRTKFIFVTGGVSSSLGKGVTVAALGCLLESRGYTVSLQKMDPYINIDPGTMSPYQHGEVYVTADGAETDLDLGYYERFTHSKLTRKNSVSTGQIYNTVIQRERKGDYLGRTVQVVPHITNEIRNRMYIVAREENPDFIIVEIGGTVGDIESIPFLEAIRQMRYEHGSSNVLFVHLTLVPTITAAGEAKTKPTQHSVKELLGLGIQPDILVCRVSQPMTKEMKNKLSLFCNVKEENVISASDISTSIYEIPKMYKEEKLDEVVLKTMGMELRESNFSEWDKMVKGLLTTKQTVQIAVVGKYISLQDAYRSIYESLSHGGIAHDTKVEFIKVDPENLNKDSYVEILKKVHGILVPGGFGDRGIEGKILAIQYARTNGIPFLGICLGMQCAVVEYGRNVLGLKDANSTEIRPDTEHPVISLLEEQNDIEQMGGTMRLGSYPCKVKENTLSYSEYKSILIHERHRHRFEFTNRYRKQYEENGMIIAGTSPDDNLVEIVEIPKHNWFIGVQFHPEFQSKPTLPHPLFAGFIRASVKYSKKG</sequence>
<comment type="function">
    <text evidence="1">Catalyzes the ATP-dependent amination of UTP to CTP with either L-glutamine or ammonia as the source of nitrogen. Regulates intracellular CTP levels through interactions with the four ribonucleotide triphosphates.</text>
</comment>
<comment type="catalytic activity">
    <reaction evidence="1">
        <text>UTP + L-glutamine + ATP + H2O = CTP + L-glutamate + ADP + phosphate + 2 H(+)</text>
        <dbReference type="Rhea" id="RHEA:26426"/>
        <dbReference type="ChEBI" id="CHEBI:15377"/>
        <dbReference type="ChEBI" id="CHEBI:15378"/>
        <dbReference type="ChEBI" id="CHEBI:29985"/>
        <dbReference type="ChEBI" id="CHEBI:30616"/>
        <dbReference type="ChEBI" id="CHEBI:37563"/>
        <dbReference type="ChEBI" id="CHEBI:43474"/>
        <dbReference type="ChEBI" id="CHEBI:46398"/>
        <dbReference type="ChEBI" id="CHEBI:58359"/>
        <dbReference type="ChEBI" id="CHEBI:456216"/>
        <dbReference type="EC" id="6.3.4.2"/>
    </reaction>
</comment>
<comment type="catalytic activity">
    <reaction evidence="1">
        <text>L-glutamine + H2O = L-glutamate + NH4(+)</text>
        <dbReference type="Rhea" id="RHEA:15889"/>
        <dbReference type="ChEBI" id="CHEBI:15377"/>
        <dbReference type="ChEBI" id="CHEBI:28938"/>
        <dbReference type="ChEBI" id="CHEBI:29985"/>
        <dbReference type="ChEBI" id="CHEBI:58359"/>
    </reaction>
</comment>
<comment type="catalytic activity">
    <reaction evidence="1">
        <text>UTP + NH4(+) + ATP = CTP + ADP + phosphate + 2 H(+)</text>
        <dbReference type="Rhea" id="RHEA:16597"/>
        <dbReference type="ChEBI" id="CHEBI:15378"/>
        <dbReference type="ChEBI" id="CHEBI:28938"/>
        <dbReference type="ChEBI" id="CHEBI:30616"/>
        <dbReference type="ChEBI" id="CHEBI:37563"/>
        <dbReference type="ChEBI" id="CHEBI:43474"/>
        <dbReference type="ChEBI" id="CHEBI:46398"/>
        <dbReference type="ChEBI" id="CHEBI:456216"/>
    </reaction>
</comment>
<comment type="activity regulation">
    <text evidence="1">Allosterically activated by GTP, when glutamine is the substrate; GTP has no effect on the reaction when ammonia is the substrate. The allosteric effector GTP functions by stabilizing the protein conformation that binds the tetrahedral intermediate(s) formed during glutamine hydrolysis. Inhibited by the product CTP, via allosteric rather than competitive inhibition.</text>
</comment>
<comment type="pathway">
    <text evidence="1">Pyrimidine metabolism; CTP biosynthesis via de novo pathway; CTP from UDP: step 2/2.</text>
</comment>
<comment type="subunit">
    <text evidence="1">Homotetramer.</text>
</comment>
<comment type="miscellaneous">
    <text evidence="1">CTPSs have evolved a hybrid strategy for distinguishing between UTP and CTP. The overlapping regions of the product feedback inhibitory and substrate sites recognize a common feature in both compounds, the triphosphate moiety. To differentiate isosteric substrate and product pyrimidine rings, an additional pocket far from the expected kinase/ligase catalytic site, specifically recognizes the cytosine and ribose portions of the product inhibitor.</text>
</comment>
<comment type="similarity">
    <text evidence="1">Belongs to the CTP synthase family.</text>
</comment>
<name>PYRG_LEPIN</name>